<feature type="chain" id="PRO_0000184363" description="Ribosomal RNA small subunit methyltransferase G">
    <location>
        <begin position="1"/>
        <end position="210"/>
    </location>
</feature>
<feature type="binding site" evidence="1">
    <location>
        <position position="76"/>
    </location>
    <ligand>
        <name>S-adenosyl-L-methionine</name>
        <dbReference type="ChEBI" id="CHEBI:59789"/>
    </ligand>
</feature>
<feature type="binding site" evidence="1">
    <location>
        <position position="81"/>
    </location>
    <ligand>
        <name>S-adenosyl-L-methionine</name>
        <dbReference type="ChEBI" id="CHEBI:59789"/>
    </ligand>
</feature>
<feature type="binding site" evidence="1">
    <location>
        <begin position="127"/>
        <end position="128"/>
    </location>
    <ligand>
        <name>S-adenosyl-L-methionine</name>
        <dbReference type="ChEBI" id="CHEBI:59789"/>
    </ligand>
</feature>
<feature type="binding site" evidence="1">
    <location>
        <position position="142"/>
    </location>
    <ligand>
        <name>S-adenosyl-L-methionine</name>
        <dbReference type="ChEBI" id="CHEBI:59789"/>
    </ligand>
</feature>
<organism>
    <name type="scientific">Aliivibrio fischeri (strain ATCC 700601 / ES114)</name>
    <name type="common">Vibrio fischeri</name>
    <dbReference type="NCBI Taxonomy" id="312309"/>
    <lineage>
        <taxon>Bacteria</taxon>
        <taxon>Pseudomonadati</taxon>
        <taxon>Pseudomonadota</taxon>
        <taxon>Gammaproteobacteria</taxon>
        <taxon>Vibrionales</taxon>
        <taxon>Vibrionaceae</taxon>
        <taxon>Aliivibrio</taxon>
    </lineage>
</organism>
<sequence length="210" mass="23676">MTDLSQQFDRLIAQTDLNVSELQKEQLLGYVALLHKWNKAYNLTSVRNPSEMVIKHILDSIVVSPKLSGERFIDVGTGPGLPGIPLAIMNPEKSFTLLDSLGKRIRFIKQVIHELKITNVTPIQSRVEEFQPEEKFDAVLSRAFASMTDMVNWCHHLPKEEDGVFLALKGIYSEEEANDLPEWCSVKNVATLIVPELEGERHLVTLAGKK</sequence>
<accession>Q5E1M7</accession>
<gene>
    <name evidence="1" type="primary">rsmG</name>
    <name type="ordered locus">VF_2574</name>
</gene>
<comment type="function">
    <text evidence="1">Specifically methylates the N7 position of guanine in position 527 of 16S rRNA.</text>
</comment>
<comment type="catalytic activity">
    <reaction evidence="1">
        <text>guanosine(527) in 16S rRNA + S-adenosyl-L-methionine = N(7)-methylguanosine(527) in 16S rRNA + S-adenosyl-L-homocysteine</text>
        <dbReference type="Rhea" id="RHEA:42732"/>
        <dbReference type="Rhea" id="RHEA-COMP:10209"/>
        <dbReference type="Rhea" id="RHEA-COMP:10210"/>
        <dbReference type="ChEBI" id="CHEBI:57856"/>
        <dbReference type="ChEBI" id="CHEBI:59789"/>
        <dbReference type="ChEBI" id="CHEBI:74269"/>
        <dbReference type="ChEBI" id="CHEBI:74480"/>
        <dbReference type="EC" id="2.1.1.170"/>
    </reaction>
</comment>
<comment type="subcellular location">
    <subcellularLocation>
        <location evidence="1">Cytoplasm</location>
    </subcellularLocation>
</comment>
<comment type="similarity">
    <text evidence="1">Belongs to the methyltransferase superfamily. RNA methyltransferase RsmG family.</text>
</comment>
<dbReference type="EC" id="2.1.1.170" evidence="1"/>
<dbReference type="EMBL" id="CP000020">
    <property type="protein sequence ID" value="AAW87069.1"/>
    <property type="molecule type" value="Genomic_DNA"/>
</dbReference>
<dbReference type="RefSeq" id="WP_011262904.1">
    <property type="nucleotide sequence ID" value="NZ_CAWLES010000001.1"/>
</dbReference>
<dbReference type="RefSeq" id="YP_205957.1">
    <property type="nucleotide sequence ID" value="NC_006840.2"/>
</dbReference>
<dbReference type="SMR" id="Q5E1M7"/>
<dbReference type="STRING" id="312309.VF_2574"/>
<dbReference type="EnsemblBacteria" id="AAW87069">
    <property type="protein sequence ID" value="AAW87069"/>
    <property type="gene ID" value="VF_2574"/>
</dbReference>
<dbReference type="GeneID" id="54165324"/>
<dbReference type="KEGG" id="vfi:VF_2574"/>
<dbReference type="PATRIC" id="fig|312309.11.peg.2601"/>
<dbReference type="eggNOG" id="COG0357">
    <property type="taxonomic scope" value="Bacteria"/>
</dbReference>
<dbReference type="HOGENOM" id="CLU_065341_2_0_6"/>
<dbReference type="OrthoDB" id="9808773at2"/>
<dbReference type="Proteomes" id="UP000000537">
    <property type="component" value="Chromosome I"/>
</dbReference>
<dbReference type="GO" id="GO:0005829">
    <property type="term" value="C:cytosol"/>
    <property type="evidence" value="ECO:0007669"/>
    <property type="project" value="TreeGrafter"/>
</dbReference>
<dbReference type="GO" id="GO:0070043">
    <property type="term" value="F:rRNA (guanine-N7-)-methyltransferase activity"/>
    <property type="evidence" value="ECO:0007669"/>
    <property type="project" value="UniProtKB-UniRule"/>
</dbReference>
<dbReference type="CDD" id="cd02440">
    <property type="entry name" value="AdoMet_MTases"/>
    <property type="match status" value="1"/>
</dbReference>
<dbReference type="FunFam" id="3.40.50.150:FF:000032">
    <property type="entry name" value="Ribosomal RNA small subunit methyltransferase G"/>
    <property type="match status" value="1"/>
</dbReference>
<dbReference type="Gene3D" id="3.40.50.150">
    <property type="entry name" value="Vaccinia Virus protein VP39"/>
    <property type="match status" value="1"/>
</dbReference>
<dbReference type="HAMAP" id="MF_00074">
    <property type="entry name" value="16SrRNA_methyltr_G"/>
    <property type="match status" value="1"/>
</dbReference>
<dbReference type="InterPro" id="IPR003682">
    <property type="entry name" value="rRNA_ssu_MeTfrase_G"/>
</dbReference>
<dbReference type="InterPro" id="IPR029063">
    <property type="entry name" value="SAM-dependent_MTases_sf"/>
</dbReference>
<dbReference type="NCBIfam" id="TIGR00138">
    <property type="entry name" value="rsmG_gidB"/>
    <property type="match status" value="1"/>
</dbReference>
<dbReference type="PANTHER" id="PTHR31760">
    <property type="entry name" value="S-ADENOSYL-L-METHIONINE-DEPENDENT METHYLTRANSFERASES SUPERFAMILY PROTEIN"/>
    <property type="match status" value="1"/>
</dbReference>
<dbReference type="PANTHER" id="PTHR31760:SF0">
    <property type="entry name" value="S-ADENOSYL-L-METHIONINE-DEPENDENT METHYLTRANSFERASES SUPERFAMILY PROTEIN"/>
    <property type="match status" value="1"/>
</dbReference>
<dbReference type="Pfam" id="PF02527">
    <property type="entry name" value="GidB"/>
    <property type="match status" value="1"/>
</dbReference>
<dbReference type="PIRSF" id="PIRSF003078">
    <property type="entry name" value="GidB"/>
    <property type="match status" value="1"/>
</dbReference>
<dbReference type="SUPFAM" id="SSF53335">
    <property type="entry name" value="S-adenosyl-L-methionine-dependent methyltransferases"/>
    <property type="match status" value="1"/>
</dbReference>
<evidence type="ECO:0000255" key="1">
    <source>
        <dbReference type="HAMAP-Rule" id="MF_00074"/>
    </source>
</evidence>
<proteinExistence type="inferred from homology"/>
<name>RSMG_ALIF1</name>
<protein>
    <recommendedName>
        <fullName evidence="1">Ribosomal RNA small subunit methyltransferase G</fullName>
        <ecNumber evidence="1">2.1.1.170</ecNumber>
    </recommendedName>
    <alternativeName>
        <fullName evidence="1">16S rRNA 7-methylguanosine methyltransferase</fullName>
        <shortName evidence="1">16S rRNA m7G methyltransferase</shortName>
    </alternativeName>
</protein>
<keyword id="KW-0963">Cytoplasm</keyword>
<keyword id="KW-0489">Methyltransferase</keyword>
<keyword id="KW-1185">Reference proteome</keyword>
<keyword id="KW-0698">rRNA processing</keyword>
<keyword id="KW-0949">S-adenosyl-L-methionine</keyword>
<keyword id="KW-0808">Transferase</keyword>
<reference key="1">
    <citation type="journal article" date="2005" name="Proc. Natl. Acad. Sci. U.S.A.">
        <title>Complete genome sequence of Vibrio fischeri: a symbiotic bacterium with pathogenic congeners.</title>
        <authorList>
            <person name="Ruby E.G."/>
            <person name="Urbanowski M."/>
            <person name="Campbell J."/>
            <person name="Dunn A."/>
            <person name="Faini M."/>
            <person name="Gunsalus R."/>
            <person name="Lostroh P."/>
            <person name="Lupp C."/>
            <person name="McCann J."/>
            <person name="Millikan D."/>
            <person name="Schaefer A."/>
            <person name="Stabb E."/>
            <person name="Stevens A."/>
            <person name="Visick K."/>
            <person name="Whistler C."/>
            <person name="Greenberg E.P."/>
        </authorList>
    </citation>
    <scope>NUCLEOTIDE SEQUENCE [LARGE SCALE GENOMIC DNA]</scope>
    <source>
        <strain>ATCC 700601 / ES114</strain>
    </source>
</reference>